<organism>
    <name type="scientific">Clostridium kluyveri (strain ATCC 8527 / DSM 555 / NBRC 12016 / NCIMB 10680 / K1)</name>
    <dbReference type="NCBI Taxonomy" id="431943"/>
    <lineage>
        <taxon>Bacteria</taxon>
        <taxon>Bacillati</taxon>
        <taxon>Bacillota</taxon>
        <taxon>Clostridia</taxon>
        <taxon>Eubacteriales</taxon>
        <taxon>Clostridiaceae</taxon>
        <taxon>Clostridium</taxon>
    </lineage>
</organism>
<keyword id="KW-0067">ATP-binding</keyword>
<keyword id="KW-0143">Chaperone</keyword>
<keyword id="KW-0547">Nucleotide-binding</keyword>
<keyword id="KW-0597">Phosphoprotein</keyword>
<keyword id="KW-1185">Reference proteome</keyword>
<keyword id="KW-0346">Stress response</keyword>
<sequence>MSKVIGIDLGTTNSCVAVMEGGDPVVIANSEGARTTPSVVSFQANGERLVGQVAKRQSITNPDKTIISIKREMGTNHKVNIDGKQYTPQEISAMVLQKIKADAEAYLGETVTQAVITVPAYFNDSQRQATKDAGKIAGLEVLRIINEPTAAALAYGMDKMDTNQKIFVYDLGGGTFDVSILELGDGVFEVKATNGDTHLGGDDFDKKIIDYIADTFKADNGIDLKNDKMALQRLKEAAEKAKIELSSSTQTNINLPFITADATGPKHIDMSLTRAKFNELTQDLVDRTIEPMKKALNDAGLTINDINKVILVGGSTRIPAVQEAVKSFTGKEPSKGVNPDECVAMGAAIQAGVLTGDVKDVLLLDVTPLTLGIETLGGVATPLIERNTTIPTKKSQVFSTAADGQTSVEIHVVQGERQMAADNKTLGRFTLSGIAPAPRGVPQIEVTFDIDANGIVNVSAKDKGTGKEANITITASTNLSDDEIDKAVKEAEKFEEQDKKRKESIEIKNNADQVVYQTEKTLKDLGDKVSSEDKKAIEEKVEAVKKVKDGDDLEAIKKATEDLTQTFYGISSKIYSQNAEPGADGGANSGANPGGTTGNTDTKDDNVVDAEYKVDDDK</sequence>
<gene>
    <name evidence="1" type="primary">dnaK</name>
    <name type="ordered locus">CKL_0902</name>
</gene>
<reference key="1">
    <citation type="journal article" date="2008" name="Proc. Natl. Acad. Sci. U.S.A.">
        <title>The genome of Clostridium kluyveri, a strict anaerobe with unique metabolic features.</title>
        <authorList>
            <person name="Seedorf H."/>
            <person name="Fricke W.F."/>
            <person name="Veith B."/>
            <person name="Brueggemann H."/>
            <person name="Liesegang H."/>
            <person name="Strittmatter A."/>
            <person name="Miethke M."/>
            <person name="Buckel W."/>
            <person name="Hinderberger J."/>
            <person name="Li F."/>
            <person name="Hagemeier C."/>
            <person name="Thauer R.K."/>
            <person name="Gottschalk G."/>
        </authorList>
    </citation>
    <scope>NUCLEOTIDE SEQUENCE [LARGE SCALE GENOMIC DNA]</scope>
    <source>
        <strain>ATCC 8527 / DSM 555 / NBRC 12016 / NCIMB 10680 / K1</strain>
    </source>
</reference>
<protein>
    <recommendedName>
        <fullName evidence="1">Chaperone protein DnaK</fullName>
    </recommendedName>
    <alternativeName>
        <fullName evidence="1">HSP70</fullName>
    </alternativeName>
    <alternativeName>
        <fullName evidence="1">Heat shock 70 kDa protein</fullName>
    </alternativeName>
    <alternativeName>
        <fullName evidence="1">Heat shock protein 70</fullName>
    </alternativeName>
</protein>
<accession>A5N6M2</accession>
<name>DNAK_CLOK5</name>
<comment type="function">
    <text evidence="1">Acts as a chaperone.</text>
</comment>
<comment type="induction">
    <text evidence="1">By stress conditions e.g. heat shock.</text>
</comment>
<comment type="similarity">
    <text evidence="1">Belongs to the heat shock protein 70 family.</text>
</comment>
<dbReference type="EMBL" id="CP000673">
    <property type="protein sequence ID" value="EDK32953.1"/>
    <property type="molecule type" value="Genomic_DNA"/>
</dbReference>
<dbReference type="RefSeq" id="WP_012101282.1">
    <property type="nucleotide sequence ID" value="NC_009706.1"/>
</dbReference>
<dbReference type="SMR" id="A5N6M2"/>
<dbReference type="STRING" id="431943.CKL_0902"/>
<dbReference type="KEGG" id="ckl:CKL_0902"/>
<dbReference type="eggNOG" id="COG0443">
    <property type="taxonomic scope" value="Bacteria"/>
</dbReference>
<dbReference type="HOGENOM" id="CLU_005965_3_0_9"/>
<dbReference type="Proteomes" id="UP000002411">
    <property type="component" value="Chromosome"/>
</dbReference>
<dbReference type="GO" id="GO:0005524">
    <property type="term" value="F:ATP binding"/>
    <property type="evidence" value="ECO:0007669"/>
    <property type="project" value="UniProtKB-UniRule"/>
</dbReference>
<dbReference type="GO" id="GO:0140662">
    <property type="term" value="F:ATP-dependent protein folding chaperone"/>
    <property type="evidence" value="ECO:0007669"/>
    <property type="project" value="InterPro"/>
</dbReference>
<dbReference type="GO" id="GO:0051082">
    <property type="term" value="F:unfolded protein binding"/>
    <property type="evidence" value="ECO:0007669"/>
    <property type="project" value="InterPro"/>
</dbReference>
<dbReference type="CDD" id="cd10234">
    <property type="entry name" value="ASKHA_NBD_HSP70_DnaK-like"/>
    <property type="match status" value="1"/>
</dbReference>
<dbReference type="FunFam" id="2.60.34.10:FF:000014">
    <property type="entry name" value="Chaperone protein DnaK HSP70"/>
    <property type="match status" value="1"/>
</dbReference>
<dbReference type="FunFam" id="1.20.1270.10:FF:000001">
    <property type="entry name" value="Molecular chaperone DnaK"/>
    <property type="match status" value="1"/>
</dbReference>
<dbReference type="FunFam" id="3.30.420.40:FF:000071">
    <property type="entry name" value="Molecular chaperone DnaK"/>
    <property type="match status" value="1"/>
</dbReference>
<dbReference type="FunFam" id="3.90.640.10:FF:000003">
    <property type="entry name" value="Molecular chaperone DnaK"/>
    <property type="match status" value="1"/>
</dbReference>
<dbReference type="Gene3D" id="1.20.1270.10">
    <property type="match status" value="1"/>
</dbReference>
<dbReference type="Gene3D" id="3.30.420.40">
    <property type="match status" value="2"/>
</dbReference>
<dbReference type="Gene3D" id="3.90.640.10">
    <property type="entry name" value="Actin, Chain A, domain 4"/>
    <property type="match status" value="1"/>
</dbReference>
<dbReference type="Gene3D" id="2.60.34.10">
    <property type="entry name" value="Substrate Binding Domain Of DNAk, Chain A, domain 1"/>
    <property type="match status" value="1"/>
</dbReference>
<dbReference type="HAMAP" id="MF_00332">
    <property type="entry name" value="DnaK"/>
    <property type="match status" value="1"/>
</dbReference>
<dbReference type="InterPro" id="IPR043129">
    <property type="entry name" value="ATPase_NBD"/>
</dbReference>
<dbReference type="InterPro" id="IPR012725">
    <property type="entry name" value="Chaperone_DnaK"/>
</dbReference>
<dbReference type="InterPro" id="IPR018181">
    <property type="entry name" value="Heat_shock_70_CS"/>
</dbReference>
<dbReference type="InterPro" id="IPR029048">
    <property type="entry name" value="HSP70_C_sf"/>
</dbReference>
<dbReference type="InterPro" id="IPR029047">
    <property type="entry name" value="HSP70_peptide-bd_sf"/>
</dbReference>
<dbReference type="InterPro" id="IPR013126">
    <property type="entry name" value="Hsp_70_fam"/>
</dbReference>
<dbReference type="NCBIfam" id="NF001413">
    <property type="entry name" value="PRK00290.1"/>
    <property type="match status" value="1"/>
</dbReference>
<dbReference type="NCBIfam" id="TIGR02350">
    <property type="entry name" value="prok_dnaK"/>
    <property type="match status" value="1"/>
</dbReference>
<dbReference type="PANTHER" id="PTHR19375">
    <property type="entry name" value="HEAT SHOCK PROTEIN 70KDA"/>
    <property type="match status" value="1"/>
</dbReference>
<dbReference type="Pfam" id="PF00012">
    <property type="entry name" value="HSP70"/>
    <property type="match status" value="1"/>
</dbReference>
<dbReference type="PRINTS" id="PR00301">
    <property type="entry name" value="HEATSHOCK70"/>
</dbReference>
<dbReference type="SUPFAM" id="SSF53067">
    <property type="entry name" value="Actin-like ATPase domain"/>
    <property type="match status" value="2"/>
</dbReference>
<dbReference type="SUPFAM" id="SSF100934">
    <property type="entry name" value="Heat shock protein 70kD (HSP70), C-terminal subdomain"/>
    <property type="match status" value="1"/>
</dbReference>
<dbReference type="SUPFAM" id="SSF100920">
    <property type="entry name" value="Heat shock protein 70kD (HSP70), peptide-binding domain"/>
    <property type="match status" value="1"/>
</dbReference>
<dbReference type="PROSITE" id="PS00297">
    <property type="entry name" value="HSP70_1"/>
    <property type="match status" value="1"/>
</dbReference>
<dbReference type="PROSITE" id="PS00329">
    <property type="entry name" value="HSP70_2"/>
    <property type="match status" value="1"/>
</dbReference>
<dbReference type="PROSITE" id="PS01036">
    <property type="entry name" value="HSP70_3"/>
    <property type="match status" value="1"/>
</dbReference>
<feature type="chain" id="PRO_1000079220" description="Chaperone protein DnaK">
    <location>
        <begin position="1"/>
        <end position="618"/>
    </location>
</feature>
<feature type="region of interest" description="Disordered" evidence="2">
    <location>
        <begin position="576"/>
        <end position="618"/>
    </location>
</feature>
<feature type="compositionally biased region" description="Gly residues" evidence="2">
    <location>
        <begin position="583"/>
        <end position="597"/>
    </location>
</feature>
<feature type="compositionally biased region" description="Basic and acidic residues" evidence="2">
    <location>
        <begin position="601"/>
        <end position="618"/>
    </location>
</feature>
<feature type="modified residue" description="Phosphothreonine; by autocatalysis" evidence="1">
    <location>
        <position position="175"/>
    </location>
</feature>
<evidence type="ECO:0000255" key="1">
    <source>
        <dbReference type="HAMAP-Rule" id="MF_00332"/>
    </source>
</evidence>
<evidence type="ECO:0000256" key="2">
    <source>
        <dbReference type="SAM" id="MobiDB-lite"/>
    </source>
</evidence>
<proteinExistence type="inferred from homology"/>